<feature type="chain" id="PRO_0000160273" description="Ephrin type-A receptor 8">
    <location>
        <begin position="1" status="less than"/>
        <end position="372"/>
    </location>
</feature>
<feature type="domain" description="Protein kinase" evidence="4">
    <location>
        <begin position="2"/>
        <end position="263"/>
    </location>
</feature>
<feature type="domain" description="SAM" evidence="5">
    <location>
        <begin position="297"/>
        <end position="372"/>
    </location>
</feature>
<feature type="short sequence motif" description="PDZ-binding" evidence="3">
    <location>
        <begin position="370"/>
        <end position="372"/>
    </location>
</feature>
<feature type="active site" description="Proton acceptor" evidence="4 6">
    <location>
        <position position="127"/>
    </location>
</feature>
<feature type="binding site" evidence="4">
    <location>
        <begin position="8"/>
        <end position="16"/>
    </location>
    <ligand>
        <name>ATP</name>
        <dbReference type="ChEBI" id="CHEBI:30616"/>
    </ligand>
</feature>
<feature type="binding site" evidence="4">
    <location>
        <position position="34"/>
    </location>
    <ligand>
        <name>ATP</name>
        <dbReference type="ChEBI" id="CHEBI:30616"/>
    </ligand>
</feature>
<feature type="modified residue" description="Phosphotyrosine; by autocatalysis" evidence="2">
    <location>
        <position position="206"/>
    </location>
</feature>
<feature type="non-terminal residue">
    <location>
        <position position="1"/>
    </location>
</feature>
<organism>
    <name type="scientific">Rattus norvegicus</name>
    <name type="common">Rat</name>
    <dbReference type="NCBI Taxonomy" id="10116"/>
    <lineage>
        <taxon>Eukaryota</taxon>
        <taxon>Metazoa</taxon>
        <taxon>Chordata</taxon>
        <taxon>Craniata</taxon>
        <taxon>Vertebrata</taxon>
        <taxon>Euteleostomi</taxon>
        <taxon>Mammalia</taxon>
        <taxon>Eutheria</taxon>
        <taxon>Euarchontoglires</taxon>
        <taxon>Glires</taxon>
        <taxon>Rodentia</taxon>
        <taxon>Myomorpha</taxon>
        <taxon>Muroidea</taxon>
        <taxon>Muridae</taxon>
        <taxon>Murinae</taxon>
        <taxon>Rattus</taxon>
    </lineage>
</organism>
<keyword id="KW-0067">ATP-binding</keyword>
<keyword id="KW-0130">Cell adhesion</keyword>
<keyword id="KW-1003">Cell membrane</keyword>
<keyword id="KW-0966">Cell projection</keyword>
<keyword id="KW-0217">Developmental protein</keyword>
<keyword id="KW-0967">Endosome</keyword>
<keyword id="KW-0418">Kinase</keyword>
<keyword id="KW-0472">Membrane</keyword>
<keyword id="KW-0524">Neurogenesis</keyword>
<keyword id="KW-0547">Nucleotide-binding</keyword>
<keyword id="KW-0597">Phosphoprotein</keyword>
<keyword id="KW-0675">Receptor</keyword>
<keyword id="KW-1185">Reference proteome</keyword>
<keyword id="KW-0808">Transferase</keyword>
<keyword id="KW-0829">Tyrosine-protein kinase</keyword>
<keyword id="KW-0832">Ubl conjugation</keyword>
<comment type="function">
    <text evidence="1">Receptor tyrosine kinase which binds promiscuously GPI-anchored ephrin-A family ligands residing on adjacent cells, leading to contact-dependent bidirectional signaling into neighboring cells. The signaling pathway downstream of the receptor is referred to as forward signaling while the signaling pathway downstream of the ephrin ligand is referred to as reverse signaling. The GPI-anchored ephrin-A EFNA2, EFNA3, and EFNA5 are able to activate EPHA8 through phosphorylation. With EFNA5 may regulate integrin-mediated cell adhesion and migration on fibronectin substrate but also neurite outgrowth. During development of the nervous system also plays a role in axon guidance. Downstream effectors of the EPHA8 signaling pathway include FYN which promotes cell adhesion upon activation by EPHA8 and the MAP kinases in the stimulation of neurite outgrowth (By similarity).</text>
</comment>
<comment type="catalytic activity">
    <reaction evidence="6">
        <text>L-tyrosyl-[protein] + ATP = O-phospho-L-tyrosyl-[protein] + ADP + H(+)</text>
        <dbReference type="Rhea" id="RHEA:10596"/>
        <dbReference type="Rhea" id="RHEA-COMP:10136"/>
        <dbReference type="Rhea" id="RHEA-COMP:20101"/>
        <dbReference type="ChEBI" id="CHEBI:15378"/>
        <dbReference type="ChEBI" id="CHEBI:30616"/>
        <dbReference type="ChEBI" id="CHEBI:46858"/>
        <dbReference type="ChEBI" id="CHEBI:61978"/>
        <dbReference type="ChEBI" id="CHEBI:456216"/>
        <dbReference type="EC" id="2.7.10.1"/>
    </reaction>
</comment>
<comment type="subunit">
    <text evidence="1">Heterotetramer upon binding of the ligand. The heterotetramer is composed of an ephrin dimer and a receptor dimer. Oligomerization is probably required to induce biological responses. May also form heterodimers with other ephrin receptors. Interacts with FYN; possible downstream effector of EPHA8 in regulation of cell adhesion. Interacts with PIK3CG; regulates integrin-mediated cell adhesion to substrate. Interacts with TIAM1; regulates clathrin-mediated endocytosis of EPHA8. Interacts with ANKS1A and ANKS1B; EPHA8 kinase activity-independent but stimulated by EPHA8 ubiquitination (By similarity).</text>
</comment>
<comment type="subcellular location">
    <subcellularLocation>
        <location evidence="2">Cell membrane</location>
        <topology evidence="3">Single-pass type I membrane protein</topology>
    </subcellularLocation>
    <subcellularLocation>
        <location evidence="2">Cell projection</location>
    </subcellularLocation>
    <subcellularLocation>
        <location evidence="2">Early endosome membrane</location>
    </subcellularLocation>
    <text evidence="2">Undergoes clathrin-mediated endocytosis upon EFNA5-binding and is targeted to early endosomes.</text>
</comment>
<comment type="tissue specificity">
    <text>Most abundant in brain.</text>
</comment>
<comment type="PTM">
    <text evidence="1">Phosphorylated. Phosphorylation is stimulated upon binding of its ligands including EFNA2, EFNA3 and EFNA5. Autophosphorylation on Tyr-206 modulates tyrosine kinase activity (By similarity).</text>
</comment>
<comment type="PTM">
    <text evidence="1">Ubiquitinated. Ubiquitination by CBL regulates the receptor stability and activity through proteasomal degradation. ANKS1A prevents ubiquitination and degradation (By similarity).</text>
</comment>
<reference key="1">
    <citation type="journal article" date="1991" name="Oncogene">
        <title>eek and erk, new members of the eph subclass of receptor protein-tyrosine kinases.</title>
        <authorList>
            <person name="Chan J."/>
            <person name="Watt V.M."/>
        </authorList>
    </citation>
    <scope>NUCLEOTIDE SEQUENCE [MRNA]</scope>
    <source>
        <strain>Wistar</strain>
        <tissue>Brain</tissue>
    </source>
</reference>
<evidence type="ECO:0000250" key="1"/>
<evidence type="ECO:0000250" key="2">
    <source>
        <dbReference type="UniProtKB" id="O09127"/>
    </source>
</evidence>
<evidence type="ECO:0000255" key="3"/>
<evidence type="ECO:0000255" key="4">
    <source>
        <dbReference type="PROSITE-ProRule" id="PRU00159"/>
    </source>
</evidence>
<evidence type="ECO:0000255" key="5">
    <source>
        <dbReference type="PROSITE-ProRule" id="PRU00184"/>
    </source>
</evidence>
<evidence type="ECO:0000255" key="6">
    <source>
        <dbReference type="PROSITE-ProRule" id="PRU10028"/>
    </source>
</evidence>
<proteinExistence type="evidence at transcript level"/>
<gene>
    <name type="primary">Epha8</name>
    <name type="synonym">Eek</name>
</gene>
<protein>
    <recommendedName>
        <fullName>Ephrin type-A receptor 8</fullName>
        <ecNumber>2.7.10.1</ecNumber>
    </recommendedName>
    <alternativeName>
        <fullName>EPH- and ELK-related kinase</fullName>
    </alternativeName>
    <alternativeName>
        <fullName>Tyrosine-protein kinase receptor EEK</fullName>
    </alternativeName>
</protein>
<accession>P29321</accession>
<dbReference type="EC" id="2.7.10.1"/>
<dbReference type="EMBL" id="X59290">
    <property type="protein sequence ID" value="CAA41979.1"/>
    <property type="molecule type" value="mRNA"/>
</dbReference>
<dbReference type="PIR" id="S23363">
    <property type="entry name" value="S23363"/>
</dbReference>
<dbReference type="SMR" id="P29321"/>
<dbReference type="STRING" id="10116.ENSRNOP00000017559"/>
<dbReference type="PaxDb" id="10116-ENSRNOP00000017559"/>
<dbReference type="UCSC" id="RGD:708543">
    <property type="organism name" value="rat"/>
</dbReference>
<dbReference type="AGR" id="RGD:708543"/>
<dbReference type="RGD" id="708543">
    <property type="gene designation" value="Epha8"/>
</dbReference>
<dbReference type="eggNOG" id="KOG0196">
    <property type="taxonomic scope" value="Eukaryota"/>
</dbReference>
<dbReference type="InParanoid" id="P29321"/>
<dbReference type="PhylomeDB" id="P29321"/>
<dbReference type="Proteomes" id="UP000002494">
    <property type="component" value="Unplaced"/>
</dbReference>
<dbReference type="GO" id="GO:0031901">
    <property type="term" value="C:early endosome membrane"/>
    <property type="evidence" value="ECO:0007669"/>
    <property type="project" value="UniProtKB-SubCell"/>
</dbReference>
<dbReference type="GO" id="GO:0043005">
    <property type="term" value="C:neuron projection"/>
    <property type="evidence" value="ECO:0000250"/>
    <property type="project" value="UniProtKB"/>
</dbReference>
<dbReference type="GO" id="GO:0005886">
    <property type="term" value="C:plasma membrane"/>
    <property type="evidence" value="ECO:0000250"/>
    <property type="project" value="UniProtKB"/>
</dbReference>
<dbReference type="GO" id="GO:0043235">
    <property type="term" value="C:receptor complex"/>
    <property type="evidence" value="ECO:0000318"/>
    <property type="project" value="GO_Central"/>
</dbReference>
<dbReference type="GO" id="GO:0005524">
    <property type="term" value="F:ATP binding"/>
    <property type="evidence" value="ECO:0007669"/>
    <property type="project" value="UniProtKB-KW"/>
</dbReference>
<dbReference type="GO" id="GO:0005003">
    <property type="term" value="F:ephrin receptor activity"/>
    <property type="evidence" value="ECO:0000250"/>
    <property type="project" value="UniProtKB"/>
</dbReference>
<dbReference type="GO" id="GO:0005004">
    <property type="term" value="F:GPI-linked ephrin receptor activity"/>
    <property type="evidence" value="ECO:0000250"/>
    <property type="project" value="UniProtKB"/>
</dbReference>
<dbReference type="GO" id="GO:0019838">
    <property type="term" value="F:growth factor binding"/>
    <property type="evidence" value="ECO:0000266"/>
    <property type="project" value="RGD"/>
</dbReference>
<dbReference type="GO" id="GO:0004714">
    <property type="term" value="F:transmembrane receptor protein tyrosine kinase activity"/>
    <property type="evidence" value="ECO:0000318"/>
    <property type="project" value="GO_Central"/>
</dbReference>
<dbReference type="GO" id="GO:0007411">
    <property type="term" value="P:axon guidance"/>
    <property type="evidence" value="ECO:0000250"/>
    <property type="project" value="UniProtKB"/>
</dbReference>
<dbReference type="GO" id="GO:0007155">
    <property type="term" value="P:cell adhesion"/>
    <property type="evidence" value="ECO:0007669"/>
    <property type="project" value="UniProtKB-KW"/>
</dbReference>
<dbReference type="GO" id="GO:0007169">
    <property type="term" value="P:cell surface receptor protein tyrosine kinase signaling pathway"/>
    <property type="evidence" value="ECO:0000318"/>
    <property type="project" value="GO_Central"/>
</dbReference>
<dbReference type="GO" id="GO:0071372">
    <property type="term" value="P:cellular response to follicle-stimulating hormone stimulus"/>
    <property type="evidence" value="ECO:0000266"/>
    <property type="project" value="RGD"/>
</dbReference>
<dbReference type="GO" id="GO:0048013">
    <property type="term" value="P:ephrin receptor signaling pathway"/>
    <property type="evidence" value="ECO:0000250"/>
    <property type="project" value="UniProtKB"/>
</dbReference>
<dbReference type="GO" id="GO:0031175">
    <property type="term" value="P:neuron projection development"/>
    <property type="evidence" value="ECO:0000250"/>
    <property type="project" value="UniProtKB"/>
</dbReference>
<dbReference type="GO" id="GO:0016322">
    <property type="term" value="P:neuron remodeling"/>
    <property type="evidence" value="ECO:0000250"/>
    <property type="project" value="UniProtKB"/>
</dbReference>
<dbReference type="GO" id="GO:0043410">
    <property type="term" value="P:positive regulation of MAPK cascade"/>
    <property type="evidence" value="ECO:0000250"/>
    <property type="project" value="UniProtKB"/>
</dbReference>
<dbReference type="GO" id="GO:0051897">
    <property type="term" value="P:positive regulation of phosphatidylinositol 3-kinase/protein kinase B signal transduction"/>
    <property type="evidence" value="ECO:0000250"/>
    <property type="project" value="UniProtKB"/>
</dbReference>
<dbReference type="GO" id="GO:0030155">
    <property type="term" value="P:regulation of cell adhesion"/>
    <property type="evidence" value="ECO:0000250"/>
    <property type="project" value="UniProtKB"/>
</dbReference>
<dbReference type="GO" id="GO:0033628">
    <property type="term" value="P:regulation of cell adhesion mediated by integrin"/>
    <property type="evidence" value="ECO:0000250"/>
    <property type="project" value="UniProtKB"/>
</dbReference>
<dbReference type="GO" id="GO:0006929">
    <property type="term" value="P:substrate-dependent cell migration"/>
    <property type="evidence" value="ECO:0000250"/>
    <property type="project" value="UniProtKB"/>
</dbReference>
<dbReference type="CDD" id="cd09550">
    <property type="entry name" value="SAM_EPH-A8"/>
    <property type="match status" value="1"/>
</dbReference>
<dbReference type="FunFam" id="1.10.510.10:FF:000130">
    <property type="entry name" value="Ephrin type-A receptor 7"/>
    <property type="match status" value="1"/>
</dbReference>
<dbReference type="FunFam" id="1.10.150.50:FF:000058">
    <property type="entry name" value="ephrin type-A receptor 8"/>
    <property type="match status" value="1"/>
</dbReference>
<dbReference type="Gene3D" id="3.30.200.20">
    <property type="entry name" value="Phosphorylase Kinase, domain 1"/>
    <property type="match status" value="1"/>
</dbReference>
<dbReference type="Gene3D" id="1.10.150.50">
    <property type="entry name" value="Transcription Factor, Ets-1"/>
    <property type="match status" value="1"/>
</dbReference>
<dbReference type="Gene3D" id="1.10.510.10">
    <property type="entry name" value="Transferase(Phosphotransferase) domain 1"/>
    <property type="match status" value="1"/>
</dbReference>
<dbReference type="InterPro" id="IPR050449">
    <property type="entry name" value="Ephrin_rcpt_TKs"/>
</dbReference>
<dbReference type="InterPro" id="IPR011009">
    <property type="entry name" value="Kinase-like_dom_sf"/>
</dbReference>
<dbReference type="InterPro" id="IPR000719">
    <property type="entry name" value="Prot_kinase_dom"/>
</dbReference>
<dbReference type="InterPro" id="IPR017441">
    <property type="entry name" value="Protein_kinase_ATP_BS"/>
</dbReference>
<dbReference type="InterPro" id="IPR001660">
    <property type="entry name" value="SAM"/>
</dbReference>
<dbReference type="InterPro" id="IPR013761">
    <property type="entry name" value="SAM/pointed_sf"/>
</dbReference>
<dbReference type="InterPro" id="IPR001245">
    <property type="entry name" value="Ser-Thr/Tyr_kinase_cat_dom"/>
</dbReference>
<dbReference type="InterPro" id="IPR008266">
    <property type="entry name" value="Tyr_kinase_AS"/>
</dbReference>
<dbReference type="InterPro" id="IPR020635">
    <property type="entry name" value="Tyr_kinase_cat_dom"/>
</dbReference>
<dbReference type="PANTHER" id="PTHR46877">
    <property type="entry name" value="EPH RECEPTOR A5"/>
    <property type="match status" value="1"/>
</dbReference>
<dbReference type="PANTHER" id="PTHR46877:SF7">
    <property type="entry name" value="EPHRIN TYPE-A RECEPTOR 8"/>
    <property type="match status" value="1"/>
</dbReference>
<dbReference type="Pfam" id="PF07714">
    <property type="entry name" value="PK_Tyr_Ser-Thr"/>
    <property type="match status" value="1"/>
</dbReference>
<dbReference type="Pfam" id="PF00536">
    <property type="entry name" value="SAM_1"/>
    <property type="match status" value="1"/>
</dbReference>
<dbReference type="PRINTS" id="PR00109">
    <property type="entry name" value="TYRKINASE"/>
</dbReference>
<dbReference type="SMART" id="SM00454">
    <property type="entry name" value="SAM"/>
    <property type="match status" value="1"/>
</dbReference>
<dbReference type="SMART" id="SM00219">
    <property type="entry name" value="TyrKc"/>
    <property type="match status" value="1"/>
</dbReference>
<dbReference type="SUPFAM" id="SSF56112">
    <property type="entry name" value="Protein kinase-like (PK-like)"/>
    <property type="match status" value="1"/>
</dbReference>
<dbReference type="SUPFAM" id="SSF47769">
    <property type="entry name" value="SAM/Pointed domain"/>
    <property type="match status" value="1"/>
</dbReference>
<dbReference type="PROSITE" id="PS00107">
    <property type="entry name" value="PROTEIN_KINASE_ATP"/>
    <property type="match status" value="1"/>
</dbReference>
<dbReference type="PROSITE" id="PS50011">
    <property type="entry name" value="PROTEIN_KINASE_DOM"/>
    <property type="match status" value="1"/>
</dbReference>
<dbReference type="PROSITE" id="PS00109">
    <property type="entry name" value="PROTEIN_KINASE_TYR"/>
    <property type="match status" value="1"/>
</dbReference>
<dbReference type="PROSITE" id="PS50105">
    <property type="entry name" value="SAM_DOMAIN"/>
    <property type="match status" value="1"/>
</dbReference>
<name>EPHA8_RAT</name>
<sequence length="372" mass="41233">RIHIEKIIGSGESGEVCYGRLQVPGQRDVPVAIKALKAGYTERQRQDFLREAAIMGQFDHPNIIRLEGVVTRGRLAMIVTEYMENGSLDAFLRTHDGQFTILQLVGMLKGVGAGMRYLSDLGYIHRDLAARNILVDGRLVCKVSDFGLSRALEDDPEAAYTTAGGKIPIRWTAPEAIAFRTFSSASDVWSFGVVMWEVLAYGERPYWNMTNQDVISSVEEGYRLPAPMGCPRALHQLMLDCWHKDRAQRPRFSHVVSVLEALVHSPESLRATATVSRCPAPAFARSCFDLRAGGNGNGDLTVGDWLDSIRMGRYRDHFAAGGYSSLGMVLHMNAQDVRALGITLMGHQKKILGSIQTMRSQLSCTQGPRRHL</sequence>